<accession>B4U000</accession>
<organism>
    <name type="scientific">Salmonella schwarzengrund (strain CVM19633)</name>
    <dbReference type="NCBI Taxonomy" id="439843"/>
    <lineage>
        <taxon>Bacteria</taxon>
        <taxon>Pseudomonadati</taxon>
        <taxon>Pseudomonadota</taxon>
        <taxon>Gammaproteobacteria</taxon>
        <taxon>Enterobacterales</taxon>
        <taxon>Enterobacteriaceae</taxon>
        <taxon>Salmonella</taxon>
    </lineage>
</organism>
<dbReference type="EC" id="2.7.7.6" evidence="1"/>
<dbReference type="EMBL" id="CP001127">
    <property type="protein sequence ID" value="ACF92573.1"/>
    <property type="molecule type" value="Genomic_DNA"/>
</dbReference>
<dbReference type="RefSeq" id="WP_000135058.1">
    <property type="nucleotide sequence ID" value="NC_011094.1"/>
</dbReference>
<dbReference type="SMR" id="B4U000"/>
<dbReference type="GeneID" id="98390719"/>
<dbReference type="KEGG" id="sew:SeSA_A3949"/>
<dbReference type="HOGENOM" id="CLU_125406_5_3_6"/>
<dbReference type="Proteomes" id="UP000001865">
    <property type="component" value="Chromosome"/>
</dbReference>
<dbReference type="GO" id="GO:0000428">
    <property type="term" value="C:DNA-directed RNA polymerase complex"/>
    <property type="evidence" value="ECO:0007669"/>
    <property type="project" value="UniProtKB-KW"/>
</dbReference>
<dbReference type="GO" id="GO:0003677">
    <property type="term" value="F:DNA binding"/>
    <property type="evidence" value="ECO:0007669"/>
    <property type="project" value="UniProtKB-UniRule"/>
</dbReference>
<dbReference type="GO" id="GO:0003899">
    <property type="term" value="F:DNA-directed RNA polymerase activity"/>
    <property type="evidence" value="ECO:0007669"/>
    <property type="project" value="UniProtKB-UniRule"/>
</dbReference>
<dbReference type="GO" id="GO:0006351">
    <property type="term" value="P:DNA-templated transcription"/>
    <property type="evidence" value="ECO:0007669"/>
    <property type="project" value="UniProtKB-UniRule"/>
</dbReference>
<dbReference type="FunFam" id="3.90.940.10:FF:000001">
    <property type="entry name" value="DNA-directed RNA polymerase subunit omega"/>
    <property type="match status" value="1"/>
</dbReference>
<dbReference type="Gene3D" id="3.90.940.10">
    <property type="match status" value="1"/>
</dbReference>
<dbReference type="HAMAP" id="MF_00366">
    <property type="entry name" value="RNApol_bact_RpoZ"/>
    <property type="match status" value="1"/>
</dbReference>
<dbReference type="InterPro" id="IPR003716">
    <property type="entry name" value="DNA-dir_RNA_pol_omega"/>
</dbReference>
<dbReference type="InterPro" id="IPR006110">
    <property type="entry name" value="Pol_omega/Rpo6/RPB6"/>
</dbReference>
<dbReference type="InterPro" id="IPR036161">
    <property type="entry name" value="RPB6/omega-like_sf"/>
</dbReference>
<dbReference type="NCBIfam" id="TIGR00690">
    <property type="entry name" value="rpoZ"/>
    <property type="match status" value="1"/>
</dbReference>
<dbReference type="PANTHER" id="PTHR34476">
    <property type="entry name" value="DNA-DIRECTED RNA POLYMERASE SUBUNIT OMEGA"/>
    <property type="match status" value="1"/>
</dbReference>
<dbReference type="PANTHER" id="PTHR34476:SF1">
    <property type="entry name" value="DNA-DIRECTED RNA POLYMERASE SUBUNIT OMEGA"/>
    <property type="match status" value="1"/>
</dbReference>
<dbReference type="Pfam" id="PF01192">
    <property type="entry name" value="RNA_pol_Rpb6"/>
    <property type="match status" value="1"/>
</dbReference>
<dbReference type="SMART" id="SM01409">
    <property type="entry name" value="RNA_pol_Rpb6"/>
    <property type="match status" value="1"/>
</dbReference>
<dbReference type="SUPFAM" id="SSF63562">
    <property type="entry name" value="RPB6/omega subunit-like"/>
    <property type="match status" value="1"/>
</dbReference>
<name>RPOZ_SALSV</name>
<proteinExistence type="inferred from homology"/>
<keyword id="KW-0240">DNA-directed RNA polymerase</keyword>
<keyword id="KW-0548">Nucleotidyltransferase</keyword>
<keyword id="KW-0804">Transcription</keyword>
<keyword id="KW-0808">Transferase</keyword>
<comment type="function">
    <text evidence="1">Promotes RNA polymerase assembly. Latches the N- and C-terminal regions of the beta' subunit thereby facilitating its interaction with the beta and alpha subunits.</text>
</comment>
<comment type="catalytic activity">
    <reaction evidence="1">
        <text>RNA(n) + a ribonucleoside 5'-triphosphate = RNA(n+1) + diphosphate</text>
        <dbReference type="Rhea" id="RHEA:21248"/>
        <dbReference type="Rhea" id="RHEA-COMP:14527"/>
        <dbReference type="Rhea" id="RHEA-COMP:17342"/>
        <dbReference type="ChEBI" id="CHEBI:33019"/>
        <dbReference type="ChEBI" id="CHEBI:61557"/>
        <dbReference type="ChEBI" id="CHEBI:140395"/>
        <dbReference type="EC" id="2.7.7.6"/>
    </reaction>
</comment>
<comment type="subunit">
    <text evidence="1">The RNAP catalytic core consists of 2 alpha, 1 beta, 1 beta' and 1 omega subunit. When a sigma factor is associated with the core the holoenzyme is formed, which can initiate transcription.</text>
</comment>
<comment type="similarity">
    <text evidence="1">Belongs to the RNA polymerase subunit omega family.</text>
</comment>
<feature type="chain" id="PRO_1000121271" description="DNA-directed RNA polymerase subunit omega">
    <location>
        <begin position="1"/>
        <end position="91"/>
    </location>
</feature>
<evidence type="ECO:0000255" key="1">
    <source>
        <dbReference type="HAMAP-Rule" id="MF_00366"/>
    </source>
</evidence>
<reference key="1">
    <citation type="journal article" date="2011" name="J. Bacteriol.">
        <title>Comparative genomics of 28 Salmonella enterica isolates: evidence for CRISPR-mediated adaptive sublineage evolution.</title>
        <authorList>
            <person name="Fricke W.F."/>
            <person name="Mammel M.K."/>
            <person name="McDermott P.F."/>
            <person name="Tartera C."/>
            <person name="White D.G."/>
            <person name="Leclerc J.E."/>
            <person name="Ravel J."/>
            <person name="Cebula T.A."/>
        </authorList>
    </citation>
    <scope>NUCLEOTIDE SEQUENCE [LARGE SCALE GENOMIC DNA]</scope>
    <source>
        <strain>CVM19633</strain>
    </source>
</reference>
<sequence length="91" mass="10237">MARVTVQDAVEKIGNRFDLVLVAARRARQMQVGGKDPLVPEENDKTTVIALREIEEGLINNQILDVRERQEQQEQEAAELQAVTAIAEGRR</sequence>
<protein>
    <recommendedName>
        <fullName evidence="1">DNA-directed RNA polymerase subunit omega</fullName>
        <shortName evidence="1">RNAP omega subunit</shortName>
        <ecNumber evidence="1">2.7.7.6</ecNumber>
    </recommendedName>
    <alternativeName>
        <fullName evidence="1">RNA polymerase omega subunit</fullName>
    </alternativeName>
    <alternativeName>
        <fullName evidence="1">Transcriptase subunit omega</fullName>
    </alternativeName>
</protein>
<gene>
    <name evidence="1" type="primary">rpoZ</name>
    <name type="ordered locus">SeSA_A3949</name>
</gene>